<feature type="chain" id="PRO_1000193937" description="Large ribosomal subunit protein bL20">
    <location>
        <begin position="1"/>
        <end position="118"/>
    </location>
</feature>
<gene>
    <name evidence="1" type="primary">rplT</name>
    <name type="ordered locus">BCQ_4377</name>
</gene>
<comment type="function">
    <text evidence="1">Binds directly to 23S ribosomal RNA and is necessary for the in vitro assembly process of the 50S ribosomal subunit. It is not involved in the protein synthesizing functions of that subunit.</text>
</comment>
<comment type="similarity">
    <text evidence="1">Belongs to the bacterial ribosomal protein bL20 family.</text>
</comment>
<name>RL20_BACCQ</name>
<evidence type="ECO:0000255" key="1">
    <source>
        <dbReference type="HAMAP-Rule" id="MF_00382"/>
    </source>
</evidence>
<evidence type="ECO:0000305" key="2"/>
<protein>
    <recommendedName>
        <fullName evidence="1">Large ribosomal subunit protein bL20</fullName>
    </recommendedName>
    <alternativeName>
        <fullName evidence="2">50S ribosomal protein L20</fullName>
    </alternativeName>
</protein>
<dbReference type="EMBL" id="CP000227">
    <property type="protein sequence ID" value="ACM14803.1"/>
    <property type="molecule type" value="Genomic_DNA"/>
</dbReference>
<dbReference type="SMR" id="B9J073"/>
<dbReference type="KEGG" id="bcq:BCQ_4377"/>
<dbReference type="HOGENOM" id="CLU_123265_0_1_9"/>
<dbReference type="Proteomes" id="UP000000441">
    <property type="component" value="Chromosome"/>
</dbReference>
<dbReference type="GO" id="GO:1990904">
    <property type="term" value="C:ribonucleoprotein complex"/>
    <property type="evidence" value="ECO:0007669"/>
    <property type="project" value="UniProtKB-KW"/>
</dbReference>
<dbReference type="GO" id="GO:0005840">
    <property type="term" value="C:ribosome"/>
    <property type="evidence" value="ECO:0007669"/>
    <property type="project" value="UniProtKB-KW"/>
</dbReference>
<dbReference type="GO" id="GO:0019843">
    <property type="term" value="F:rRNA binding"/>
    <property type="evidence" value="ECO:0007669"/>
    <property type="project" value="UniProtKB-UniRule"/>
</dbReference>
<dbReference type="GO" id="GO:0003735">
    <property type="term" value="F:structural constituent of ribosome"/>
    <property type="evidence" value="ECO:0007669"/>
    <property type="project" value="InterPro"/>
</dbReference>
<dbReference type="GO" id="GO:0000027">
    <property type="term" value="P:ribosomal large subunit assembly"/>
    <property type="evidence" value="ECO:0007669"/>
    <property type="project" value="UniProtKB-UniRule"/>
</dbReference>
<dbReference type="GO" id="GO:0006412">
    <property type="term" value="P:translation"/>
    <property type="evidence" value="ECO:0007669"/>
    <property type="project" value="InterPro"/>
</dbReference>
<dbReference type="CDD" id="cd07026">
    <property type="entry name" value="Ribosomal_L20"/>
    <property type="match status" value="1"/>
</dbReference>
<dbReference type="FunFam" id="1.10.1900.20:FF:000001">
    <property type="entry name" value="50S ribosomal protein L20"/>
    <property type="match status" value="1"/>
</dbReference>
<dbReference type="Gene3D" id="6.10.160.10">
    <property type="match status" value="1"/>
</dbReference>
<dbReference type="Gene3D" id="1.10.1900.20">
    <property type="entry name" value="Ribosomal protein L20"/>
    <property type="match status" value="1"/>
</dbReference>
<dbReference type="HAMAP" id="MF_00382">
    <property type="entry name" value="Ribosomal_bL20"/>
    <property type="match status" value="1"/>
</dbReference>
<dbReference type="InterPro" id="IPR005813">
    <property type="entry name" value="Ribosomal_bL20"/>
</dbReference>
<dbReference type="InterPro" id="IPR049946">
    <property type="entry name" value="RIBOSOMAL_L20_CS"/>
</dbReference>
<dbReference type="InterPro" id="IPR035566">
    <property type="entry name" value="Ribosomal_protein_bL20_C"/>
</dbReference>
<dbReference type="NCBIfam" id="TIGR01032">
    <property type="entry name" value="rplT_bact"/>
    <property type="match status" value="1"/>
</dbReference>
<dbReference type="PANTHER" id="PTHR10986">
    <property type="entry name" value="39S RIBOSOMAL PROTEIN L20"/>
    <property type="match status" value="1"/>
</dbReference>
<dbReference type="Pfam" id="PF00453">
    <property type="entry name" value="Ribosomal_L20"/>
    <property type="match status" value="1"/>
</dbReference>
<dbReference type="PRINTS" id="PR00062">
    <property type="entry name" value="RIBOSOMALL20"/>
</dbReference>
<dbReference type="SUPFAM" id="SSF74731">
    <property type="entry name" value="Ribosomal protein L20"/>
    <property type="match status" value="1"/>
</dbReference>
<dbReference type="PROSITE" id="PS00937">
    <property type="entry name" value="RIBOSOMAL_L20"/>
    <property type="match status" value="1"/>
</dbReference>
<accession>B9J073</accession>
<organism>
    <name type="scientific">Bacillus cereus (strain Q1)</name>
    <dbReference type="NCBI Taxonomy" id="361100"/>
    <lineage>
        <taxon>Bacteria</taxon>
        <taxon>Bacillati</taxon>
        <taxon>Bacillota</taxon>
        <taxon>Bacilli</taxon>
        <taxon>Bacillales</taxon>
        <taxon>Bacillaceae</taxon>
        <taxon>Bacillus</taxon>
        <taxon>Bacillus cereus group</taxon>
    </lineage>
</organism>
<proteinExistence type="inferred from homology"/>
<keyword id="KW-0687">Ribonucleoprotein</keyword>
<keyword id="KW-0689">Ribosomal protein</keyword>
<keyword id="KW-0694">RNA-binding</keyword>
<keyword id="KW-0699">rRNA-binding</keyword>
<sequence>MPRVKGGTVTRQRRKKVIKLAKGYYGSKNTLFKVANQQVMKSLMYAFRDRRQKKRDFRKLWITRINAAARMNGLSYSRLMHGLKNAGIEVNRKMLADLAVHDEKAFAELATVAKNNIN</sequence>
<reference key="1">
    <citation type="journal article" date="2009" name="J. Bacteriol.">
        <title>Complete genome sequence of the extremophilic Bacillus cereus strain Q1 with industrial applications.</title>
        <authorList>
            <person name="Xiong Z."/>
            <person name="Jiang Y."/>
            <person name="Qi D."/>
            <person name="Lu H."/>
            <person name="Yang F."/>
            <person name="Yang J."/>
            <person name="Chen L."/>
            <person name="Sun L."/>
            <person name="Xu X."/>
            <person name="Xue Y."/>
            <person name="Zhu Y."/>
            <person name="Jin Q."/>
        </authorList>
    </citation>
    <scope>NUCLEOTIDE SEQUENCE [LARGE SCALE GENOMIC DNA]</scope>
    <source>
        <strain>Q1</strain>
    </source>
</reference>